<feature type="chain" id="PRO_0000158573" description="Probable manganese-dependent inorganic pyrophosphatase">
    <location>
        <begin position="1"/>
        <end position="314"/>
    </location>
</feature>
<feature type="binding site" evidence="1">
    <location>
        <position position="10"/>
    </location>
    <ligand>
        <name>Mn(2+)</name>
        <dbReference type="ChEBI" id="CHEBI:29035"/>
        <label>1</label>
    </ligand>
</feature>
<feature type="binding site" evidence="1">
    <location>
        <position position="14"/>
    </location>
    <ligand>
        <name>Mn(2+)</name>
        <dbReference type="ChEBI" id="CHEBI:29035"/>
        <label>1</label>
    </ligand>
</feature>
<feature type="binding site" evidence="1">
    <location>
        <position position="16"/>
    </location>
    <ligand>
        <name>Mn(2+)</name>
        <dbReference type="ChEBI" id="CHEBI:29035"/>
        <label>2</label>
    </ligand>
</feature>
<feature type="binding site" evidence="1">
    <location>
        <position position="80"/>
    </location>
    <ligand>
        <name>Mn(2+)</name>
        <dbReference type="ChEBI" id="CHEBI:29035"/>
        <label>1</label>
    </ligand>
</feature>
<feature type="binding site" evidence="1">
    <location>
        <position position="80"/>
    </location>
    <ligand>
        <name>Mn(2+)</name>
        <dbReference type="ChEBI" id="CHEBI:29035"/>
        <label>2</label>
    </ligand>
</feature>
<feature type="binding site" evidence="1">
    <location>
        <position position="102"/>
    </location>
    <ligand>
        <name>Mn(2+)</name>
        <dbReference type="ChEBI" id="CHEBI:29035"/>
        <label>2</label>
    </ligand>
</feature>
<feature type="binding site" evidence="1">
    <location>
        <position position="154"/>
    </location>
    <ligand>
        <name>Mn(2+)</name>
        <dbReference type="ChEBI" id="CHEBI:29035"/>
        <label>2</label>
    </ligand>
</feature>
<sequence>MSDKILVFGHQKPDTDAIGSSYGFSYLSNHRPNGALNTEVVALGTPNEETQFVLDYFGVKAPRVVKSAKEEGVDTVILTDHNEFQQSISDIEDLTIYGVVDHHRVANFNTAAPLFMTVEPVGSASSIVYRKFLEANVEIPKEVAGLLLSGLISDTLLLKSPTTHVTDHKVAKELAEIAGVNLEEYGLAMLKAGTNLSTKTAEELIDIDAKTFELNGSNVRIAQVNTVDIPEVLERLSDIKAAINASMTANGYDDFVFMITDIVNSNSEIIALGAHPEKSEAAFNFTLADDHAFLAGAVSRKKQVVPQLTESFNK</sequence>
<reference key="1">
    <citation type="journal article" date="2001" name="Genome Res.">
        <title>The complete genome sequence of the lactic acid bacterium Lactococcus lactis ssp. lactis IL1403.</title>
        <authorList>
            <person name="Bolotin A."/>
            <person name="Wincker P."/>
            <person name="Mauger S."/>
            <person name="Jaillon O."/>
            <person name="Malarme K."/>
            <person name="Weissenbach J."/>
            <person name="Ehrlich S.D."/>
            <person name="Sorokin A."/>
        </authorList>
    </citation>
    <scope>NUCLEOTIDE SEQUENCE [LARGE SCALE GENOMIC DNA]</scope>
    <source>
        <strain>IL1403</strain>
    </source>
</reference>
<keyword id="KW-0963">Cytoplasm</keyword>
<keyword id="KW-0378">Hydrolase</keyword>
<keyword id="KW-0464">Manganese</keyword>
<keyword id="KW-0479">Metal-binding</keyword>
<keyword id="KW-1185">Reference proteome</keyword>
<organism>
    <name type="scientific">Lactococcus lactis subsp. lactis (strain IL1403)</name>
    <name type="common">Streptococcus lactis</name>
    <dbReference type="NCBI Taxonomy" id="272623"/>
    <lineage>
        <taxon>Bacteria</taxon>
        <taxon>Bacillati</taxon>
        <taxon>Bacillota</taxon>
        <taxon>Bacilli</taxon>
        <taxon>Lactobacillales</taxon>
        <taxon>Streptococcaceae</taxon>
        <taxon>Lactococcus</taxon>
    </lineage>
</organism>
<gene>
    <name type="primary">ppaC</name>
    <name type="ordered locus">LL1812</name>
    <name type="ORF">L62663</name>
</gene>
<evidence type="ECO:0000250" key="1"/>
<evidence type="ECO:0000305" key="2"/>
<name>PPAC_LACLA</name>
<accession>Q9CEM5</accession>
<comment type="catalytic activity">
    <reaction>
        <text>diphosphate + H2O = 2 phosphate + H(+)</text>
        <dbReference type="Rhea" id="RHEA:24576"/>
        <dbReference type="ChEBI" id="CHEBI:15377"/>
        <dbReference type="ChEBI" id="CHEBI:15378"/>
        <dbReference type="ChEBI" id="CHEBI:33019"/>
        <dbReference type="ChEBI" id="CHEBI:43474"/>
        <dbReference type="EC" id="3.6.1.1"/>
    </reaction>
</comment>
<comment type="cofactor">
    <cofactor evidence="1">
        <name>Mn(2+)</name>
        <dbReference type="ChEBI" id="CHEBI:29035"/>
    </cofactor>
    <text evidence="1">Binds 2 manganese ions per subunit.</text>
</comment>
<comment type="subcellular location">
    <subcellularLocation>
        <location evidence="1">Cytoplasm</location>
    </subcellularLocation>
</comment>
<comment type="similarity">
    <text evidence="2">Belongs to the PPase class C family.</text>
</comment>
<proteinExistence type="inferred from homology"/>
<dbReference type="EC" id="3.6.1.1"/>
<dbReference type="EMBL" id="AE005176">
    <property type="protein sequence ID" value="AAK05910.1"/>
    <property type="molecule type" value="Genomic_DNA"/>
</dbReference>
<dbReference type="PIR" id="D86851">
    <property type="entry name" value="D86851"/>
</dbReference>
<dbReference type="RefSeq" id="NP_267969.1">
    <property type="nucleotide sequence ID" value="NC_002662.1"/>
</dbReference>
<dbReference type="RefSeq" id="WP_003130319.1">
    <property type="nucleotide sequence ID" value="NC_002662.1"/>
</dbReference>
<dbReference type="SMR" id="Q9CEM5"/>
<dbReference type="PaxDb" id="272623-L62663"/>
<dbReference type="EnsemblBacteria" id="AAK05910">
    <property type="protein sequence ID" value="AAK05910"/>
    <property type="gene ID" value="L62663"/>
</dbReference>
<dbReference type="KEGG" id="lla:L62663"/>
<dbReference type="PATRIC" id="fig|272623.7.peg.1942"/>
<dbReference type="eggNOG" id="COG1227">
    <property type="taxonomic scope" value="Bacteria"/>
</dbReference>
<dbReference type="HOGENOM" id="CLU_025243_0_1_9"/>
<dbReference type="OrthoDB" id="9766150at2"/>
<dbReference type="Proteomes" id="UP000002196">
    <property type="component" value="Chromosome"/>
</dbReference>
<dbReference type="GO" id="GO:0005737">
    <property type="term" value="C:cytoplasm"/>
    <property type="evidence" value="ECO:0007669"/>
    <property type="project" value="UniProtKB-SubCell"/>
</dbReference>
<dbReference type="GO" id="GO:0004427">
    <property type="term" value="F:inorganic diphosphate phosphatase activity"/>
    <property type="evidence" value="ECO:0007669"/>
    <property type="project" value="UniProtKB-UniRule"/>
</dbReference>
<dbReference type="GO" id="GO:0030145">
    <property type="term" value="F:manganese ion binding"/>
    <property type="evidence" value="ECO:0007669"/>
    <property type="project" value="UniProtKB-UniRule"/>
</dbReference>
<dbReference type="FunFam" id="3.10.310.20:FF:000001">
    <property type="entry name" value="Probable manganese-dependent inorganic pyrophosphatase"/>
    <property type="match status" value="1"/>
</dbReference>
<dbReference type="FunFam" id="3.90.1640.10:FF:000001">
    <property type="entry name" value="Probable manganese-dependent inorganic pyrophosphatase"/>
    <property type="match status" value="1"/>
</dbReference>
<dbReference type="Gene3D" id="3.10.310.20">
    <property type="entry name" value="DHHA2 domain"/>
    <property type="match status" value="1"/>
</dbReference>
<dbReference type="Gene3D" id="3.90.1640.10">
    <property type="entry name" value="inorganic pyrophosphatase (n-terminal core)"/>
    <property type="match status" value="1"/>
</dbReference>
<dbReference type="HAMAP" id="MF_00207">
    <property type="entry name" value="PPase_C"/>
    <property type="match status" value="1"/>
</dbReference>
<dbReference type="InterPro" id="IPR001667">
    <property type="entry name" value="DDH_dom"/>
</dbReference>
<dbReference type="InterPro" id="IPR038763">
    <property type="entry name" value="DHH_sf"/>
</dbReference>
<dbReference type="InterPro" id="IPR004097">
    <property type="entry name" value="DHHA2"/>
</dbReference>
<dbReference type="InterPro" id="IPR038222">
    <property type="entry name" value="DHHA2_dom_sf"/>
</dbReference>
<dbReference type="InterPro" id="IPR022934">
    <property type="entry name" value="Mn-dep_inorganic_PyrPase"/>
</dbReference>
<dbReference type="InterPro" id="IPR051319">
    <property type="entry name" value="Oligoribo/pAp-PDE_c-di-AMP_PDE"/>
</dbReference>
<dbReference type="NCBIfam" id="NF003877">
    <property type="entry name" value="PRK05427.1"/>
    <property type="match status" value="1"/>
</dbReference>
<dbReference type="PANTHER" id="PTHR47618">
    <property type="entry name" value="BIFUNCTIONAL OLIGORIBONUCLEASE AND PAP PHOSPHATASE NRNA"/>
    <property type="match status" value="1"/>
</dbReference>
<dbReference type="PANTHER" id="PTHR47618:SF1">
    <property type="entry name" value="BIFUNCTIONAL OLIGORIBONUCLEASE AND PAP PHOSPHATASE NRNA"/>
    <property type="match status" value="1"/>
</dbReference>
<dbReference type="Pfam" id="PF01368">
    <property type="entry name" value="DHH"/>
    <property type="match status" value="1"/>
</dbReference>
<dbReference type="Pfam" id="PF02833">
    <property type="entry name" value="DHHA2"/>
    <property type="match status" value="1"/>
</dbReference>
<dbReference type="SMART" id="SM01131">
    <property type="entry name" value="DHHA2"/>
    <property type="match status" value="1"/>
</dbReference>
<dbReference type="SUPFAM" id="SSF64182">
    <property type="entry name" value="DHH phosphoesterases"/>
    <property type="match status" value="1"/>
</dbReference>
<protein>
    <recommendedName>
        <fullName>Probable manganese-dependent inorganic pyrophosphatase</fullName>
        <ecNumber>3.6.1.1</ecNumber>
    </recommendedName>
    <alternativeName>
        <fullName>Pyrophosphate phospho-hydrolase</fullName>
        <shortName>PPase</shortName>
    </alternativeName>
</protein>